<protein>
    <recommendedName>
        <fullName>Deaminated glutathione amidase</fullName>
        <shortName>dGSH amidase</shortName>
        <ecNumber evidence="1">3.5.1.128</ecNumber>
    </recommendedName>
    <alternativeName>
        <fullName>Nitrilase homolog 1</fullName>
    </alternativeName>
</protein>
<comment type="function">
    <text evidence="1">Catalyzes the hydrolysis of the amide bond in N-(4-oxoglutarate)-L-cysteinylglycine (deaminated glutathione), a metabolite repair reaction to dispose of the harmful deaminated glutathione. Plays a role in cell growth and apoptosis: loss of expression promotes cell growth, resistance to DNA damage stress and increased incidence to NMBA-induced tumors. Has tumor suppressor properties that enhances the apoptotic responsiveness in cancer cells; this effect is additive to the tumor suppressor activity of FHIT. It is also a negative regulator of primary T-cells.</text>
</comment>
<comment type="catalytic activity">
    <reaction evidence="1">
        <text>N-(4-oxoglutaryl)-L-cysteinylglycine + H2O = L-cysteinylglycine + 2-oxoglutarate</text>
        <dbReference type="Rhea" id="RHEA:54532"/>
        <dbReference type="ChEBI" id="CHEBI:15377"/>
        <dbReference type="ChEBI" id="CHEBI:16810"/>
        <dbReference type="ChEBI" id="CHEBI:61694"/>
        <dbReference type="ChEBI" id="CHEBI:138256"/>
        <dbReference type="EC" id="3.5.1.128"/>
    </reaction>
</comment>
<comment type="subcellular location">
    <molecule>Isoform 2</molecule>
    <subcellularLocation>
        <location evidence="1">Mitochondrion</location>
    </subcellularLocation>
</comment>
<comment type="subcellular location">
    <molecule>Isoform 1</molecule>
    <subcellularLocation>
        <location evidence="1">Cytoplasm</location>
    </subcellularLocation>
</comment>
<comment type="alternative products">
    <event type="alternative splicing"/>
    <isoform>
        <id>Q86X76-1</id>
        <name>2</name>
        <sequence type="displayed"/>
    </isoform>
    <isoform>
        <id>Q86X76-2</id>
        <name>1</name>
        <name>3</name>
        <sequence type="described" ref="VSP_011546"/>
    </isoform>
    <isoform>
        <id>Q86X76-3</id>
        <name>4</name>
        <sequence type="described" ref="VSP_011544 VSP_011547"/>
    </isoform>
    <isoform>
        <id>Q86X76-4</id>
        <name>5</name>
        <sequence type="described" ref="VSP_011545"/>
    </isoform>
    <isoform>
        <id>Q86X76-5</id>
        <name>6</name>
        <sequence type="described" ref="VSP_053711 VSP_053712"/>
    </isoform>
</comment>
<comment type="tissue specificity">
    <text evidence="4">Detected in heart, brain, placenta, liver, skeletal muscle, kidney and pancreas.</text>
</comment>
<comment type="miscellaneous">
    <text>According to Rosetta Stone theory, the existence of a fusion protein in one genome predicts that the separate polypeptides expressed in other organisms function in the same cellular or biochemical pathway. In Drosophila melanogaster and Caenorhabditis elegans, NitFhit is a fusion protein composed of a C-terminal Fhit domain and a domain related to plant and bacterial nitrilase.</text>
</comment>
<comment type="miscellaneous">
    <molecule>Isoform 2</molecule>
    <text>Major isoform.</text>
</comment>
<comment type="miscellaneous">
    <molecule>Isoform 6</molecule>
    <text evidence="7">Based on a naturally occurring readthrough transcript which produces a NIT1-DEDD fusion protein. The last 4 amino acids of this isoform (PVSS) are encoded by the last DEDD exon.</text>
</comment>
<comment type="similarity">
    <text evidence="7">Belongs to the carbon-nitrogen hydrolase superfamily. NIT1/NIT2 family.</text>
</comment>
<proteinExistence type="evidence at protein level"/>
<reference key="1">
    <citation type="journal article" date="1998" name="Proc. Natl. Acad. Sci. U.S.A.">
        <title>Nitrilase and Fhit homologs are encoded as fusion proteins in Drosophila melanogaster and Caenorhabditis elegans.</title>
        <authorList>
            <person name="Pekarsky Y."/>
            <person name="Campiglio M."/>
            <person name="Siprashvili Z."/>
            <person name="Druck T."/>
            <person name="Sedkov Y."/>
            <person name="Tillib S."/>
            <person name="Draganescu A."/>
            <person name="Wermuth P."/>
            <person name="Rothman J.H."/>
            <person name="Huebner K."/>
            <person name="Buchberg A.M."/>
            <person name="Mazo A."/>
            <person name="Brenner C."/>
            <person name="Croce C.M."/>
        </authorList>
    </citation>
    <scope>NUCLEOTIDE SEQUENCE [GENOMIC DNA / MRNA] (ISOFORMS 1; 2; 4 AND 5)</scope>
    <scope>TISSUE SPECIFICITY</scope>
</reference>
<reference key="2">
    <citation type="submission" date="2004-06" db="EMBL/GenBank/DDBJ databases">
        <title>Cloning of human full open reading frames in Gateway(TM) system entry vector (pDONR201).</title>
        <authorList>
            <person name="Halleck A."/>
            <person name="Ebert L."/>
            <person name="Mkoundinya M."/>
            <person name="Schick M."/>
            <person name="Eisenstein S."/>
            <person name="Neubert P."/>
            <person name="Kstrang K."/>
            <person name="Schatten R."/>
            <person name="Shen B."/>
            <person name="Henze S."/>
            <person name="Mar W."/>
            <person name="Korn B."/>
            <person name="Zuo D."/>
            <person name="Hu Y."/>
            <person name="LaBaer J."/>
        </authorList>
    </citation>
    <scope>NUCLEOTIDE SEQUENCE [LARGE SCALE MRNA] (ISOFORM 2)</scope>
</reference>
<reference key="3">
    <citation type="journal article" date="2006" name="Nature">
        <title>The DNA sequence and biological annotation of human chromosome 1.</title>
        <authorList>
            <person name="Gregory S.G."/>
            <person name="Barlow K.F."/>
            <person name="McLay K.E."/>
            <person name="Kaul R."/>
            <person name="Swarbreck D."/>
            <person name="Dunham A."/>
            <person name="Scott C.E."/>
            <person name="Howe K.L."/>
            <person name="Woodfine K."/>
            <person name="Spencer C.C.A."/>
            <person name="Jones M.C."/>
            <person name="Gillson C."/>
            <person name="Searle S."/>
            <person name="Zhou Y."/>
            <person name="Kokocinski F."/>
            <person name="McDonald L."/>
            <person name="Evans R."/>
            <person name="Phillips K."/>
            <person name="Atkinson A."/>
            <person name="Cooper R."/>
            <person name="Jones C."/>
            <person name="Hall R.E."/>
            <person name="Andrews T.D."/>
            <person name="Lloyd C."/>
            <person name="Ainscough R."/>
            <person name="Almeida J.P."/>
            <person name="Ambrose K.D."/>
            <person name="Anderson F."/>
            <person name="Andrew R.W."/>
            <person name="Ashwell R.I.S."/>
            <person name="Aubin K."/>
            <person name="Babbage A.K."/>
            <person name="Bagguley C.L."/>
            <person name="Bailey J."/>
            <person name="Beasley H."/>
            <person name="Bethel G."/>
            <person name="Bird C.P."/>
            <person name="Bray-Allen S."/>
            <person name="Brown J.Y."/>
            <person name="Brown A.J."/>
            <person name="Buckley D."/>
            <person name="Burton J."/>
            <person name="Bye J."/>
            <person name="Carder C."/>
            <person name="Chapman J.C."/>
            <person name="Clark S.Y."/>
            <person name="Clarke G."/>
            <person name="Clee C."/>
            <person name="Cobley V."/>
            <person name="Collier R.E."/>
            <person name="Corby N."/>
            <person name="Coville G.J."/>
            <person name="Davies J."/>
            <person name="Deadman R."/>
            <person name="Dunn M."/>
            <person name="Earthrowl M."/>
            <person name="Ellington A.G."/>
            <person name="Errington H."/>
            <person name="Frankish A."/>
            <person name="Frankland J."/>
            <person name="French L."/>
            <person name="Garner P."/>
            <person name="Garnett J."/>
            <person name="Gay L."/>
            <person name="Ghori M.R.J."/>
            <person name="Gibson R."/>
            <person name="Gilby L.M."/>
            <person name="Gillett W."/>
            <person name="Glithero R.J."/>
            <person name="Grafham D.V."/>
            <person name="Griffiths C."/>
            <person name="Griffiths-Jones S."/>
            <person name="Grocock R."/>
            <person name="Hammond S."/>
            <person name="Harrison E.S.I."/>
            <person name="Hart E."/>
            <person name="Haugen E."/>
            <person name="Heath P.D."/>
            <person name="Holmes S."/>
            <person name="Holt K."/>
            <person name="Howden P.J."/>
            <person name="Hunt A.R."/>
            <person name="Hunt S.E."/>
            <person name="Hunter G."/>
            <person name="Isherwood J."/>
            <person name="James R."/>
            <person name="Johnson C."/>
            <person name="Johnson D."/>
            <person name="Joy A."/>
            <person name="Kay M."/>
            <person name="Kershaw J.K."/>
            <person name="Kibukawa M."/>
            <person name="Kimberley A.M."/>
            <person name="King A."/>
            <person name="Knights A.J."/>
            <person name="Lad H."/>
            <person name="Laird G."/>
            <person name="Lawlor S."/>
            <person name="Leongamornlert D.A."/>
            <person name="Lloyd D.M."/>
            <person name="Loveland J."/>
            <person name="Lovell J."/>
            <person name="Lush M.J."/>
            <person name="Lyne R."/>
            <person name="Martin S."/>
            <person name="Mashreghi-Mohammadi M."/>
            <person name="Matthews L."/>
            <person name="Matthews N.S.W."/>
            <person name="McLaren S."/>
            <person name="Milne S."/>
            <person name="Mistry S."/>
            <person name="Moore M.J.F."/>
            <person name="Nickerson T."/>
            <person name="O'Dell C.N."/>
            <person name="Oliver K."/>
            <person name="Palmeiri A."/>
            <person name="Palmer S.A."/>
            <person name="Parker A."/>
            <person name="Patel D."/>
            <person name="Pearce A.V."/>
            <person name="Peck A.I."/>
            <person name="Pelan S."/>
            <person name="Phelps K."/>
            <person name="Phillimore B.J."/>
            <person name="Plumb R."/>
            <person name="Rajan J."/>
            <person name="Raymond C."/>
            <person name="Rouse G."/>
            <person name="Saenphimmachak C."/>
            <person name="Sehra H.K."/>
            <person name="Sheridan E."/>
            <person name="Shownkeen R."/>
            <person name="Sims S."/>
            <person name="Skuce C.D."/>
            <person name="Smith M."/>
            <person name="Steward C."/>
            <person name="Subramanian S."/>
            <person name="Sycamore N."/>
            <person name="Tracey A."/>
            <person name="Tromans A."/>
            <person name="Van Helmond Z."/>
            <person name="Wall M."/>
            <person name="Wallis J.M."/>
            <person name="White S."/>
            <person name="Whitehead S.L."/>
            <person name="Wilkinson J.E."/>
            <person name="Willey D.L."/>
            <person name="Williams H."/>
            <person name="Wilming L."/>
            <person name="Wray P.W."/>
            <person name="Wu Z."/>
            <person name="Coulson A."/>
            <person name="Vaudin M."/>
            <person name="Sulston J.E."/>
            <person name="Durbin R.M."/>
            <person name="Hubbard T."/>
            <person name="Wooster R."/>
            <person name="Dunham I."/>
            <person name="Carter N.P."/>
            <person name="McVean G."/>
            <person name="Ross M.T."/>
            <person name="Harrow J."/>
            <person name="Olson M.V."/>
            <person name="Beck S."/>
            <person name="Rogers J."/>
            <person name="Bentley D.R."/>
        </authorList>
    </citation>
    <scope>NUCLEOTIDE SEQUENCE [LARGE SCALE GENOMIC DNA]</scope>
</reference>
<reference key="4">
    <citation type="submission" date="2005-09" db="EMBL/GenBank/DDBJ databases">
        <authorList>
            <person name="Mural R.J."/>
            <person name="Istrail S."/>
            <person name="Sutton G.G."/>
            <person name="Florea L."/>
            <person name="Halpern A.L."/>
            <person name="Mobarry C.M."/>
            <person name="Lippert R."/>
            <person name="Walenz B."/>
            <person name="Shatkay H."/>
            <person name="Dew I."/>
            <person name="Miller J.R."/>
            <person name="Flanigan M.J."/>
            <person name="Edwards N.J."/>
            <person name="Bolanos R."/>
            <person name="Fasulo D."/>
            <person name="Halldorsson B.V."/>
            <person name="Hannenhalli S."/>
            <person name="Turner R."/>
            <person name="Yooseph S."/>
            <person name="Lu F."/>
            <person name="Nusskern D.R."/>
            <person name="Shue B.C."/>
            <person name="Zheng X.H."/>
            <person name="Zhong F."/>
            <person name="Delcher A.L."/>
            <person name="Huson D.H."/>
            <person name="Kravitz S.A."/>
            <person name="Mouchard L."/>
            <person name="Reinert K."/>
            <person name="Remington K.A."/>
            <person name="Clark A.G."/>
            <person name="Waterman M.S."/>
            <person name="Eichler E.E."/>
            <person name="Adams M.D."/>
            <person name="Hunkapiller M.W."/>
            <person name="Myers E.W."/>
            <person name="Venter J.C."/>
        </authorList>
    </citation>
    <scope>NUCLEOTIDE SEQUENCE [LARGE SCALE GENOMIC DNA]</scope>
</reference>
<reference key="5">
    <citation type="journal article" date="2004" name="Genome Res.">
        <title>The status, quality, and expansion of the NIH full-length cDNA project: the Mammalian Gene Collection (MGC).</title>
        <authorList>
            <consortium name="The MGC Project Team"/>
        </authorList>
    </citation>
    <scope>NUCLEOTIDE SEQUENCE [LARGE SCALE MRNA] (ISOFORM 6)</scope>
    <source>
        <tissue>Brain</tissue>
    </source>
</reference>
<reference key="6">
    <citation type="journal article" date="2011" name="BMC Syst. Biol.">
        <title>Initial characterization of the human central proteome.</title>
        <authorList>
            <person name="Burkard T.R."/>
            <person name="Planyavsky M."/>
            <person name="Kaupe I."/>
            <person name="Breitwieser F.P."/>
            <person name="Buerckstuemmer T."/>
            <person name="Bennett K.L."/>
            <person name="Superti-Furga G."/>
            <person name="Colinge J."/>
        </authorList>
    </citation>
    <scope>IDENTIFICATION BY MASS SPECTROMETRY [LARGE SCALE ANALYSIS]</scope>
</reference>
<reference key="7">
    <citation type="journal article" date="2014" name="J. Proteomics">
        <title>An enzyme assisted RP-RPLC approach for in-depth analysis of human liver phosphoproteome.</title>
        <authorList>
            <person name="Bian Y."/>
            <person name="Song C."/>
            <person name="Cheng K."/>
            <person name="Dong M."/>
            <person name="Wang F."/>
            <person name="Huang J."/>
            <person name="Sun D."/>
            <person name="Wang L."/>
            <person name="Ye M."/>
            <person name="Zou H."/>
        </authorList>
    </citation>
    <scope>IDENTIFICATION BY MASS SPECTROMETRY [LARGE SCALE ANALYSIS]</scope>
    <source>
        <tissue>Liver</tissue>
    </source>
</reference>
<keyword id="KW-0025">Alternative splicing</keyword>
<keyword id="KW-0963">Cytoplasm</keyword>
<keyword id="KW-0378">Hydrolase</keyword>
<keyword id="KW-0496">Mitochondrion</keyword>
<keyword id="KW-1267">Proteomics identification</keyword>
<keyword id="KW-1185">Reference proteome</keyword>
<keyword id="KW-0809">Transit peptide</keyword>
<gene>
    <name type="primary">NIT1</name>
</gene>
<evidence type="ECO:0000250" key="1">
    <source>
        <dbReference type="UniProtKB" id="Q8VDK1"/>
    </source>
</evidence>
<evidence type="ECO:0000255" key="2"/>
<evidence type="ECO:0000255" key="3">
    <source>
        <dbReference type="PROSITE-ProRule" id="PRU00054"/>
    </source>
</evidence>
<evidence type="ECO:0000269" key="4">
    <source>
    </source>
</evidence>
<evidence type="ECO:0000303" key="5">
    <source>
    </source>
</evidence>
<evidence type="ECO:0000303" key="6">
    <source>
    </source>
</evidence>
<evidence type="ECO:0000305" key="7"/>
<dbReference type="EC" id="3.5.1.128" evidence="1"/>
<dbReference type="EMBL" id="AF069984">
    <property type="protein sequence ID" value="AAC39901.1"/>
    <property type="molecule type" value="Genomic_DNA"/>
</dbReference>
<dbReference type="EMBL" id="AF069987">
    <property type="protein sequence ID" value="AAC39907.1"/>
    <property type="molecule type" value="mRNA"/>
</dbReference>
<dbReference type="EMBL" id="CR541814">
    <property type="protein sequence ID" value="CAG46613.1"/>
    <property type="molecule type" value="mRNA"/>
</dbReference>
<dbReference type="EMBL" id="CR541846">
    <property type="protein sequence ID" value="CAG46644.1"/>
    <property type="molecule type" value="mRNA"/>
</dbReference>
<dbReference type="EMBL" id="AL591806">
    <property type="status" value="NOT_ANNOTATED_CDS"/>
    <property type="molecule type" value="Genomic_DNA"/>
</dbReference>
<dbReference type="EMBL" id="CH471121">
    <property type="protein sequence ID" value="EAW52656.1"/>
    <property type="molecule type" value="Genomic_DNA"/>
</dbReference>
<dbReference type="EMBL" id="CH471121">
    <property type="protein sequence ID" value="EAW52654.1"/>
    <property type="molecule type" value="Genomic_DNA"/>
</dbReference>
<dbReference type="EMBL" id="CH471121">
    <property type="protein sequence ID" value="EAW52657.1"/>
    <property type="molecule type" value="Genomic_DNA"/>
</dbReference>
<dbReference type="EMBL" id="BC046149">
    <property type="protein sequence ID" value="AAH46149.1"/>
    <property type="molecule type" value="mRNA"/>
</dbReference>
<dbReference type="CCDS" id="CCDS1218.1">
    <molecule id="Q86X76-1"/>
</dbReference>
<dbReference type="CCDS" id="CCDS53401.1">
    <molecule id="Q86X76-5"/>
</dbReference>
<dbReference type="CCDS" id="CCDS53402.1">
    <molecule id="Q86X76-4"/>
</dbReference>
<dbReference type="CCDS" id="CCDS53403.1">
    <molecule id="Q86X76-2"/>
</dbReference>
<dbReference type="RefSeq" id="NP_001172021.1">
    <molecule id="Q86X76-5"/>
    <property type="nucleotide sequence ID" value="NM_001185092.2"/>
</dbReference>
<dbReference type="RefSeq" id="NP_001172022.1">
    <molecule id="Q86X76-4"/>
    <property type="nucleotide sequence ID" value="NM_001185093.2"/>
</dbReference>
<dbReference type="RefSeq" id="NP_001172023.1">
    <molecule id="Q86X76-2"/>
    <property type="nucleotide sequence ID" value="NM_001185094.2"/>
</dbReference>
<dbReference type="RefSeq" id="NP_005591.1">
    <molecule id="Q86X76-1"/>
    <property type="nucleotide sequence ID" value="NM_005600.3"/>
</dbReference>
<dbReference type="RefSeq" id="XP_005245273.1">
    <molecule id="Q86X76-2"/>
    <property type="nucleotide sequence ID" value="XM_005245216.5"/>
</dbReference>
<dbReference type="RefSeq" id="XP_054192768.1">
    <molecule id="Q86X76-2"/>
    <property type="nucleotide sequence ID" value="XM_054336793.1"/>
</dbReference>
<dbReference type="SMR" id="Q86X76"/>
<dbReference type="BioGRID" id="110882">
    <property type="interactions" value="123"/>
</dbReference>
<dbReference type="FunCoup" id="Q86X76">
    <property type="interactions" value="1946"/>
</dbReference>
<dbReference type="IntAct" id="Q86X76">
    <property type="interactions" value="61"/>
</dbReference>
<dbReference type="MINT" id="Q86X76"/>
<dbReference type="STRING" id="9606.ENSP00000356988"/>
<dbReference type="ChEMBL" id="CHEMBL4295883"/>
<dbReference type="GlyGen" id="Q86X76">
    <property type="glycosylation" value="2 sites, 1 O-linked glycan (1 site)"/>
</dbReference>
<dbReference type="iPTMnet" id="Q86X76"/>
<dbReference type="PhosphoSitePlus" id="Q86X76"/>
<dbReference type="SwissPalm" id="Q86X76"/>
<dbReference type="BioMuta" id="NIT1"/>
<dbReference type="DMDM" id="51704324"/>
<dbReference type="jPOST" id="Q86X76"/>
<dbReference type="MassIVE" id="Q86X76"/>
<dbReference type="PaxDb" id="9606-ENSP00000356988"/>
<dbReference type="PeptideAtlas" id="Q86X76"/>
<dbReference type="ProteomicsDB" id="70250">
    <molecule id="Q86X76-1"/>
</dbReference>
<dbReference type="ProteomicsDB" id="70251">
    <molecule id="Q86X76-2"/>
</dbReference>
<dbReference type="ProteomicsDB" id="70252">
    <molecule id="Q86X76-3"/>
</dbReference>
<dbReference type="ProteomicsDB" id="70253">
    <molecule id="Q86X76-4"/>
</dbReference>
<dbReference type="Pumba" id="Q86X76"/>
<dbReference type="Antibodypedia" id="1672">
    <property type="antibodies" value="258 antibodies from 25 providers"/>
</dbReference>
<dbReference type="DNASU" id="4817"/>
<dbReference type="Ensembl" id="ENST00000368007.8">
    <molecule id="Q86X76-4"/>
    <property type="protein sequence ID" value="ENSP00000356986.4"/>
    <property type="gene ID" value="ENSG00000158793.14"/>
</dbReference>
<dbReference type="Ensembl" id="ENST00000368008.5">
    <molecule id="Q86X76-5"/>
    <property type="protein sequence ID" value="ENSP00000356987.1"/>
    <property type="gene ID" value="ENSG00000158793.14"/>
</dbReference>
<dbReference type="Ensembl" id="ENST00000368009.7">
    <molecule id="Q86X76-1"/>
    <property type="protein sequence ID" value="ENSP00000356988.2"/>
    <property type="gene ID" value="ENSG00000158793.14"/>
</dbReference>
<dbReference type="Ensembl" id="ENST00000392190.9">
    <molecule id="Q86X76-2"/>
    <property type="protein sequence ID" value="ENSP00000376028.5"/>
    <property type="gene ID" value="ENSG00000158793.14"/>
</dbReference>
<dbReference type="GeneID" id="4817"/>
<dbReference type="KEGG" id="hsa:4817"/>
<dbReference type="MANE-Select" id="ENST00000368009.7">
    <property type="protein sequence ID" value="ENSP00000356988.2"/>
    <property type="RefSeq nucleotide sequence ID" value="NM_005600.3"/>
    <property type="RefSeq protein sequence ID" value="NP_005591.1"/>
</dbReference>
<dbReference type="UCSC" id="uc001fxv.3">
    <molecule id="Q86X76-1"/>
    <property type="organism name" value="human"/>
</dbReference>
<dbReference type="AGR" id="HGNC:7828"/>
<dbReference type="CTD" id="4817"/>
<dbReference type="DisGeNET" id="4817"/>
<dbReference type="GeneCards" id="NIT1"/>
<dbReference type="HGNC" id="HGNC:7828">
    <property type="gene designation" value="NIT1"/>
</dbReference>
<dbReference type="HPA" id="ENSG00000158793">
    <property type="expression patterns" value="Low tissue specificity"/>
</dbReference>
<dbReference type="MIM" id="604618">
    <property type="type" value="gene"/>
</dbReference>
<dbReference type="neXtProt" id="NX_Q86X76"/>
<dbReference type="OpenTargets" id="ENSG00000158793"/>
<dbReference type="PharmGKB" id="PA31636"/>
<dbReference type="VEuPathDB" id="HostDB:ENSG00000158793"/>
<dbReference type="eggNOG" id="KOG0807">
    <property type="taxonomic scope" value="Eukaryota"/>
</dbReference>
<dbReference type="GeneTree" id="ENSGT00550000075099"/>
<dbReference type="HOGENOM" id="CLU_030130_1_1_1"/>
<dbReference type="InParanoid" id="Q86X76"/>
<dbReference type="OMA" id="MRVAVCQ"/>
<dbReference type="OrthoDB" id="680339at2759"/>
<dbReference type="PAN-GO" id="Q86X76">
    <property type="GO annotations" value="0 GO annotations based on evolutionary models"/>
</dbReference>
<dbReference type="PhylomeDB" id="Q86X76"/>
<dbReference type="TreeFam" id="TF313080"/>
<dbReference type="PathwayCommons" id="Q86X76"/>
<dbReference type="SignaLink" id="Q86X76"/>
<dbReference type="BioGRID-ORCS" id="4817">
    <property type="hits" value="25 hits in 1160 CRISPR screens"/>
</dbReference>
<dbReference type="ChiTaRS" id="NIT1">
    <property type="organism name" value="human"/>
</dbReference>
<dbReference type="GenomeRNAi" id="4817"/>
<dbReference type="Pharos" id="Q86X76">
    <property type="development level" value="Tbio"/>
</dbReference>
<dbReference type="PRO" id="PR:Q86X76"/>
<dbReference type="Proteomes" id="UP000005640">
    <property type="component" value="Chromosome 1"/>
</dbReference>
<dbReference type="RNAct" id="Q86X76">
    <property type="molecule type" value="protein"/>
</dbReference>
<dbReference type="Bgee" id="ENSG00000158793">
    <property type="expression patterns" value="Expressed in right adrenal gland cortex and 202 other cell types or tissues"/>
</dbReference>
<dbReference type="GO" id="GO:0005737">
    <property type="term" value="C:cytoplasm"/>
    <property type="evidence" value="ECO:0000250"/>
    <property type="project" value="UniProtKB"/>
</dbReference>
<dbReference type="GO" id="GO:0005739">
    <property type="term" value="C:mitochondrion"/>
    <property type="evidence" value="ECO:0006056"/>
    <property type="project" value="FlyBase"/>
</dbReference>
<dbReference type="GO" id="GO:0005634">
    <property type="term" value="C:nucleus"/>
    <property type="evidence" value="ECO:0007005"/>
    <property type="project" value="UniProtKB"/>
</dbReference>
<dbReference type="GO" id="GO:0110050">
    <property type="term" value="F:deaminated glutathione amidase activity"/>
    <property type="evidence" value="ECO:0000250"/>
    <property type="project" value="UniProtKB"/>
</dbReference>
<dbReference type="GO" id="GO:0043605">
    <property type="term" value="P:amide catabolic process"/>
    <property type="evidence" value="ECO:0000250"/>
    <property type="project" value="ARUK-UCL"/>
</dbReference>
<dbReference type="CDD" id="cd07572">
    <property type="entry name" value="nit"/>
    <property type="match status" value="1"/>
</dbReference>
<dbReference type="FunFam" id="3.60.110.10:FF:000005">
    <property type="entry name" value="nitrilase homolog 1 isoform X1"/>
    <property type="match status" value="1"/>
</dbReference>
<dbReference type="Gene3D" id="3.60.110.10">
    <property type="entry name" value="Carbon-nitrogen hydrolase"/>
    <property type="match status" value="1"/>
</dbReference>
<dbReference type="InterPro" id="IPR003010">
    <property type="entry name" value="C-N_Hydrolase"/>
</dbReference>
<dbReference type="InterPro" id="IPR036526">
    <property type="entry name" value="C-N_Hydrolase_sf"/>
</dbReference>
<dbReference type="InterPro" id="IPR045254">
    <property type="entry name" value="Nit1/2_C-N_Hydrolase"/>
</dbReference>
<dbReference type="InterPro" id="IPR001110">
    <property type="entry name" value="UPF0012_CS"/>
</dbReference>
<dbReference type="PANTHER" id="PTHR23088:SF27">
    <property type="entry name" value="DEAMINATED GLUTATHIONE AMIDASE"/>
    <property type="match status" value="1"/>
</dbReference>
<dbReference type="PANTHER" id="PTHR23088">
    <property type="entry name" value="NITRILASE-RELATED"/>
    <property type="match status" value="1"/>
</dbReference>
<dbReference type="Pfam" id="PF00795">
    <property type="entry name" value="CN_hydrolase"/>
    <property type="match status" value="1"/>
</dbReference>
<dbReference type="SUPFAM" id="SSF56317">
    <property type="entry name" value="Carbon-nitrogen hydrolase"/>
    <property type="match status" value="1"/>
</dbReference>
<dbReference type="PROSITE" id="PS50263">
    <property type="entry name" value="CN_HYDROLASE"/>
    <property type="match status" value="1"/>
</dbReference>
<dbReference type="PROSITE" id="PS01227">
    <property type="entry name" value="UPF0012"/>
    <property type="match status" value="1"/>
</dbReference>
<accession>Q86X76</accession>
<accession>B1AQP3</accession>
<accession>D3DVF4</accession>
<accession>O76091</accession>
<organism>
    <name type="scientific">Homo sapiens</name>
    <name type="common">Human</name>
    <dbReference type="NCBI Taxonomy" id="9606"/>
    <lineage>
        <taxon>Eukaryota</taxon>
        <taxon>Metazoa</taxon>
        <taxon>Chordata</taxon>
        <taxon>Craniata</taxon>
        <taxon>Vertebrata</taxon>
        <taxon>Euteleostomi</taxon>
        <taxon>Mammalia</taxon>
        <taxon>Eutheria</taxon>
        <taxon>Euarchontoglires</taxon>
        <taxon>Primates</taxon>
        <taxon>Haplorrhini</taxon>
        <taxon>Catarrhini</taxon>
        <taxon>Hominidae</taxon>
        <taxon>Homo</taxon>
    </lineage>
</organism>
<sequence length="327" mass="35896">MLGFITRPPHRFLSLLCPGLRIPQLSVLCAQPRPRAMAISSSSCELPLVAVCQVTSTPDKQQNFKTCAELVREAARLGACLAFLPEAFDFIARDPAETLHLSEPLGGKLLEEYTQLARECGLWLSLGGFHERGQDWEQTQKIYNCHVLLNSKGAVVATYRKTHLCDVEIPGQGPMCESNSTMPGPSLESPVSTPAGKIGLAVCYDMRFPELSLALAQAGAEILTYPSAFGSITGPAHWEVLLRARAIETQCYVVAAAQCGRHHEKRASYGHSMVVDPWGTVVARCSEGPGLCLARIDLNYLRQLRRHLPVFQHRRPDLYGNLGHPLS</sequence>
<feature type="transit peptide" description="Mitochondrion" evidence="2">
    <location>
        <begin position="1"/>
        <end position="13"/>
    </location>
</feature>
<feature type="chain" id="PRO_0000213251" description="Deaminated glutathione amidase" evidence="2">
    <location>
        <begin position="14"/>
        <end position="327"/>
    </location>
</feature>
<feature type="domain" description="CN hydrolase" evidence="3">
    <location>
        <begin position="46"/>
        <end position="298"/>
    </location>
</feature>
<feature type="active site" description="Proton acceptor" evidence="3">
    <location>
        <position position="86"/>
    </location>
</feature>
<feature type="active site" description="Proton donor" evidence="3">
    <location>
        <position position="161"/>
    </location>
</feature>
<feature type="active site" description="Nucleophile" evidence="3">
    <location>
        <position position="203"/>
    </location>
</feature>
<feature type="splice variant" id="VSP_011546" description="In isoform 1." evidence="6">
    <location>
        <begin position="1"/>
        <end position="36"/>
    </location>
</feature>
<feature type="splice variant" id="VSP_011545" description="In isoform 5." evidence="6">
    <original>MLGFITRPPHRFLSLLCPGLRIPQLSVLCAQPR</original>
    <variation>MTFGLRKRLSEERGFSLM</variation>
    <location>
        <begin position="1"/>
        <end position="33"/>
    </location>
</feature>
<feature type="splice variant" id="VSP_011544" description="In isoform 4." evidence="6">
    <original>MLGFITRPPHRFLSLLCPGLRIPQLSVLCAQ</original>
    <variation>MVLAISSCWASSPGLLTDSCPFCVLDSGYLNSQYFVLSPGRTYSLSRR</variation>
    <location>
        <begin position="1"/>
        <end position="31"/>
    </location>
</feature>
<feature type="splice variant" id="VSP_053711" description="In isoform 6." evidence="5">
    <original>VLLR</original>
    <variation>PVSS</variation>
    <location>
        <begin position="240"/>
        <end position="243"/>
    </location>
</feature>
<feature type="splice variant" id="VSP_053712" description="In isoform 6." evidence="5">
    <location>
        <begin position="244"/>
        <end position="327"/>
    </location>
</feature>
<feature type="splice variant" id="VSP_011547" description="In isoform 4." evidence="6">
    <original>S</original>
    <variation>SDLTSVSLDLPLPPPPCHYELVLM</variation>
    <location>
        <position position="327"/>
    </location>
</feature>
<feature type="sequence conflict" description="In Ref. 5; AAH46149." evidence="7" ref="5">
    <original>A</original>
    <variation>P</variation>
    <location>
        <position position="79"/>
    </location>
</feature>
<name>NIT1_HUMAN</name>